<sequence length="562" mass="62116">MDDNKRPLYLPFAGPAILEAPLINKGSAFSEEERIFFNLEGLVPYAIETIEEQASRAYDQFRSFNNDLDKHIYLRNIQDTNETLFYRLVQNNISEMMPIIYTPTVGLACERFSKNYRRNRGLFISYPNKDRIDDILNNSTRQKVKIIVVTDGERILGLGDQGIGGMGIPIGKLSLYTSCGGISPAYTLPITLDVGTDNPQLLEDPMYMGWRHPRIGGEEYAEFIEAFMQAVHVRWPDTLIQFEDFAQKNAMPILERYKDRYCCFNDDIQGTAAVAVGSLLAACKAAGTELNQQRIAFLGAGSAGCGIAEAIVAQMVSEGISDEQARTQVCMVDRWGLLLDNMPNLLPFQQKLAQKCTNIQNWSNFSDNISLLDVVNNTKPTVLIGVSGVPGLFTEEIIRAMHSHCARPIIFPLSNPTSRVEATPKDILHWTSGQALVATGSPFEPVVVDGETFEIAQCNNSFIFPGIGLGVLASGARHVSDAMLMASSRALAECSPLAIDGSGPLLPKLEDIHAVSKHIAFAVGKVAVEQGLTLPMSDEILQQSIEGNFWSPEYRRYKRTSF</sequence>
<reference key="1">
    <citation type="submission" date="2007-07" db="EMBL/GenBank/DDBJ databases">
        <title>Complete sequence of chromosome of Shewanella baltica OS185.</title>
        <authorList>
            <consortium name="US DOE Joint Genome Institute"/>
            <person name="Copeland A."/>
            <person name="Lucas S."/>
            <person name="Lapidus A."/>
            <person name="Barry K."/>
            <person name="Glavina del Rio T."/>
            <person name="Dalin E."/>
            <person name="Tice H."/>
            <person name="Pitluck S."/>
            <person name="Sims D."/>
            <person name="Brettin T."/>
            <person name="Bruce D."/>
            <person name="Detter J.C."/>
            <person name="Han C."/>
            <person name="Schmutz J."/>
            <person name="Larimer F."/>
            <person name="Land M."/>
            <person name="Hauser L."/>
            <person name="Kyrpides N."/>
            <person name="Mikhailova N."/>
            <person name="Brettar I."/>
            <person name="Rodrigues J."/>
            <person name="Konstantinidis K."/>
            <person name="Tiedje J."/>
            <person name="Richardson P."/>
        </authorList>
    </citation>
    <scope>NUCLEOTIDE SEQUENCE [LARGE SCALE GENOMIC DNA]</scope>
    <source>
        <strain>OS185</strain>
    </source>
</reference>
<evidence type="ECO:0000255" key="1">
    <source>
        <dbReference type="HAMAP-Rule" id="MF_01619"/>
    </source>
</evidence>
<dbReference type="EC" id="1.1.1.38" evidence="1"/>
<dbReference type="EMBL" id="CP000753">
    <property type="protein sequence ID" value="ABS09759.1"/>
    <property type="molecule type" value="Genomic_DNA"/>
</dbReference>
<dbReference type="RefSeq" id="WP_006080238.1">
    <property type="nucleotide sequence ID" value="NC_009665.1"/>
</dbReference>
<dbReference type="SMR" id="A6WSH0"/>
<dbReference type="KEGG" id="sbm:Shew185_3634"/>
<dbReference type="HOGENOM" id="CLU_011405_5_2_6"/>
<dbReference type="GO" id="GO:0005829">
    <property type="term" value="C:cytosol"/>
    <property type="evidence" value="ECO:0007669"/>
    <property type="project" value="TreeGrafter"/>
</dbReference>
<dbReference type="GO" id="GO:0004471">
    <property type="term" value="F:malate dehydrogenase (decarboxylating) (NAD+) activity"/>
    <property type="evidence" value="ECO:0007669"/>
    <property type="project" value="UniProtKB-UniRule"/>
</dbReference>
<dbReference type="GO" id="GO:0046872">
    <property type="term" value="F:metal ion binding"/>
    <property type="evidence" value="ECO:0007669"/>
    <property type="project" value="UniProtKB-KW"/>
</dbReference>
<dbReference type="GO" id="GO:0051287">
    <property type="term" value="F:NAD binding"/>
    <property type="evidence" value="ECO:0007669"/>
    <property type="project" value="InterPro"/>
</dbReference>
<dbReference type="GO" id="GO:0008948">
    <property type="term" value="F:oxaloacetate decarboxylase activity"/>
    <property type="evidence" value="ECO:0007669"/>
    <property type="project" value="UniProtKB-UniRule"/>
</dbReference>
<dbReference type="GO" id="GO:0006108">
    <property type="term" value="P:malate metabolic process"/>
    <property type="evidence" value="ECO:0007669"/>
    <property type="project" value="TreeGrafter"/>
</dbReference>
<dbReference type="CDD" id="cd05312">
    <property type="entry name" value="NAD_bind_1_malic_enz"/>
    <property type="match status" value="1"/>
</dbReference>
<dbReference type="FunFam" id="3.40.50.10380:FF:000001">
    <property type="entry name" value="NAD-dependent malic enzyme"/>
    <property type="match status" value="1"/>
</dbReference>
<dbReference type="FunFam" id="3.40.50.720:FF:000055">
    <property type="entry name" value="NAD-dependent malic enzyme"/>
    <property type="match status" value="1"/>
</dbReference>
<dbReference type="Gene3D" id="3.40.50.10380">
    <property type="entry name" value="Malic enzyme, N-terminal domain"/>
    <property type="match status" value="1"/>
</dbReference>
<dbReference type="Gene3D" id="3.40.50.720">
    <property type="entry name" value="NAD(P)-binding Rossmann-like Domain"/>
    <property type="match status" value="1"/>
</dbReference>
<dbReference type="HAMAP" id="MF_01619">
    <property type="entry name" value="NAD_malic_enz"/>
    <property type="match status" value="1"/>
</dbReference>
<dbReference type="InterPro" id="IPR046346">
    <property type="entry name" value="Aminoacid_DH-like_N_sf"/>
</dbReference>
<dbReference type="InterPro" id="IPR015884">
    <property type="entry name" value="Malic_enzyme_CS"/>
</dbReference>
<dbReference type="InterPro" id="IPR012301">
    <property type="entry name" value="Malic_N_dom"/>
</dbReference>
<dbReference type="InterPro" id="IPR037062">
    <property type="entry name" value="Malic_N_dom_sf"/>
</dbReference>
<dbReference type="InterPro" id="IPR012302">
    <property type="entry name" value="Malic_NAD-bd"/>
</dbReference>
<dbReference type="InterPro" id="IPR001891">
    <property type="entry name" value="Malic_OxRdtase"/>
</dbReference>
<dbReference type="InterPro" id="IPR036291">
    <property type="entry name" value="NAD(P)-bd_dom_sf"/>
</dbReference>
<dbReference type="InterPro" id="IPR023667">
    <property type="entry name" value="NAD_malic_enz_proteobac"/>
</dbReference>
<dbReference type="NCBIfam" id="NF010052">
    <property type="entry name" value="PRK13529.1"/>
    <property type="match status" value="1"/>
</dbReference>
<dbReference type="PANTHER" id="PTHR23406">
    <property type="entry name" value="MALIC ENZYME-RELATED"/>
    <property type="match status" value="1"/>
</dbReference>
<dbReference type="PANTHER" id="PTHR23406:SF34">
    <property type="entry name" value="NAD-DEPENDENT MALIC ENZYME, MITOCHONDRIAL"/>
    <property type="match status" value="1"/>
</dbReference>
<dbReference type="Pfam" id="PF00390">
    <property type="entry name" value="malic"/>
    <property type="match status" value="1"/>
</dbReference>
<dbReference type="Pfam" id="PF03949">
    <property type="entry name" value="Malic_M"/>
    <property type="match status" value="1"/>
</dbReference>
<dbReference type="PIRSF" id="PIRSF000106">
    <property type="entry name" value="ME"/>
    <property type="match status" value="1"/>
</dbReference>
<dbReference type="PRINTS" id="PR00072">
    <property type="entry name" value="MALOXRDTASE"/>
</dbReference>
<dbReference type="SMART" id="SM01274">
    <property type="entry name" value="malic"/>
    <property type="match status" value="1"/>
</dbReference>
<dbReference type="SMART" id="SM00919">
    <property type="entry name" value="Malic_M"/>
    <property type="match status" value="1"/>
</dbReference>
<dbReference type="SUPFAM" id="SSF53223">
    <property type="entry name" value="Aminoacid dehydrogenase-like, N-terminal domain"/>
    <property type="match status" value="1"/>
</dbReference>
<dbReference type="SUPFAM" id="SSF51735">
    <property type="entry name" value="NAD(P)-binding Rossmann-fold domains"/>
    <property type="match status" value="1"/>
</dbReference>
<dbReference type="PROSITE" id="PS00331">
    <property type="entry name" value="MALIC_ENZYMES"/>
    <property type="match status" value="1"/>
</dbReference>
<accession>A6WSH0</accession>
<protein>
    <recommendedName>
        <fullName evidence="1">NAD-dependent malic enzyme</fullName>
        <shortName evidence="1">NAD-ME</shortName>
        <ecNumber evidence="1">1.1.1.38</ecNumber>
    </recommendedName>
</protein>
<keyword id="KW-0479">Metal-binding</keyword>
<keyword id="KW-0520">NAD</keyword>
<keyword id="KW-0560">Oxidoreductase</keyword>
<name>MAO1_SHEB8</name>
<gene>
    <name evidence="1" type="primary">maeA</name>
    <name type="ordered locus">Shew185_3634</name>
</gene>
<organism>
    <name type="scientific">Shewanella baltica (strain OS185)</name>
    <dbReference type="NCBI Taxonomy" id="402882"/>
    <lineage>
        <taxon>Bacteria</taxon>
        <taxon>Pseudomonadati</taxon>
        <taxon>Pseudomonadota</taxon>
        <taxon>Gammaproteobacteria</taxon>
        <taxon>Alteromonadales</taxon>
        <taxon>Shewanellaceae</taxon>
        <taxon>Shewanella</taxon>
    </lineage>
</organism>
<proteinExistence type="inferred from homology"/>
<comment type="catalytic activity">
    <reaction evidence="1">
        <text>(S)-malate + NAD(+) = pyruvate + CO2 + NADH</text>
        <dbReference type="Rhea" id="RHEA:12653"/>
        <dbReference type="ChEBI" id="CHEBI:15361"/>
        <dbReference type="ChEBI" id="CHEBI:15589"/>
        <dbReference type="ChEBI" id="CHEBI:16526"/>
        <dbReference type="ChEBI" id="CHEBI:57540"/>
        <dbReference type="ChEBI" id="CHEBI:57945"/>
        <dbReference type="EC" id="1.1.1.38"/>
    </reaction>
</comment>
<comment type="catalytic activity">
    <reaction evidence="1">
        <text>oxaloacetate + H(+) = pyruvate + CO2</text>
        <dbReference type="Rhea" id="RHEA:15641"/>
        <dbReference type="ChEBI" id="CHEBI:15361"/>
        <dbReference type="ChEBI" id="CHEBI:15378"/>
        <dbReference type="ChEBI" id="CHEBI:16452"/>
        <dbReference type="ChEBI" id="CHEBI:16526"/>
        <dbReference type="EC" id="1.1.1.38"/>
    </reaction>
</comment>
<comment type="cofactor">
    <cofactor evidence="1">
        <name>Mg(2+)</name>
        <dbReference type="ChEBI" id="CHEBI:18420"/>
    </cofactor>
    <cofactor evidence="1">
        <name>Mn(2+)</name>
        <dbReference type="ChEBI" id="CHEBI:29035"/>
    </cofactor>
    <text evidence="1">Divalent metal cations. Prefers magnesium or manganese.</text>
</comment>
<comment type="subunit">
    <text evidence="1">Homotetramer.</text>
</comment>
<comment type="similarity">
    <text evidence="1">Belongs to the malic enzymes family.</text>
</comment>
<feature type="chain" id="PRO_1000069540" description="NAD-dependent malic enzyme">
    <location>
        <begin position="1"/>
        <end position="562"/>
    </location>
</feature>
<feature type="active site" description="Proton donor" evidence="1">
    <location>
        <position position="101"/>
    </location>
</feature>
<feature type="active site" description="Proton acceptor" evidence="1">
    <location>
        <position position="172"/>
    </location>
</feature>
<feature type="binding site" evidence="1">
    <location>
        <position position="154"/>
    </location>
    <ligand>
        <name>NAD(+)</name>
        <dbReference type="ChEBI" id="CHEBI:57540"/>
    </ligand>
</feature>
<feature type="binding site" evidence="1">
    <location>
        <position position="243"/>
    </location>
    <ligand>
        <name>a divalent metal cation</name>
        <dbReference type="ChEBI" id="CHEBI:60240"/>
    </ligand>
</feature>
<feature type="binding site" evidence="1">
    <location>
        <position position="244"/>
    </location>
    <ligand>
        <name>a divalent metal cation</name>
        <dbReference type="ChEBI" id="CHEBI:60240"/>
    </ligand>
</feature>
<feature type="binding site" evidence="1">
    <location>
        <position position="267"/>
    </location>
    <ligand>
        <name>a divalent metal cation</name>
        <dbReference type="ChEBI" id="CHEBI:60240"/>
    </ligand>
</feature>
<feature type="binding site" evidence="1">
    <location>
        <position position="267"/>
    </location>
    <ligand>
        <name>NAD(+)</name>
        <dbReference type="ChEBI" id="CHEBI:57540"/>
    </ligand>
</feature>
<feature type="binding site" evidence="1">
    <location>
        <position position="415"/>
    </location>
    <ligand>
        <name>NAD(+)</name>
        <dbReference type="ChEBI" id="CHEBI:57540"/>
    </ligand>
</feature>
<feature type="site" description="Important for activity" evidence="1">
    <location>
        <position position="267"/>
    </location>
</feature>